<gene>
    <name evidence="1" type="primary">kup2</name>
    <name type="ordered locus">RHE_CH02603</name>
</gene>
<protein>
    <recommendedName>
        <fullName evidence="1">Probable potassium transport system protein Kup 2</fullName>
    </recommendedName>
</protein>
<comment type="function">
    <text evidence="1">Transport of potassium into the cell. Likely operates as a K(+):H(+) symporter.</text>
</comment>
<comment type="catalytic activity">
    <reaction evidence="1">
        <text>K(+)(in) + H(+)(in) = K(+)(out) + H(+)(out)</text>
        <dbReference type="Rhea" id="RHEA:28490"/>
        <dbReference type="ChEBI" id="CHEBI:15378"/>
        <dbReference type="ChEBI" id="CHEBI:29103"/>
    </reaction>
    <physiologicalReaction direction="right-to-left" evidence="1">
        <dbReference type="Rhea" id="RHEA:28492"/>
    </physiologicalReaction>
</comment>
<comment type="subcellular location">
    <subcellularLocation>
        <location evidence="1">Cell inner membrane</location>
        <topology evidence="1">Multi-pass membrane protein</topology>
    </subcellularLocation>
</comment>
<comment type="similarity">
    <text evidence="1">Belongs to the HAK/KUP transporter (TC 2.A.72) family.</text>
</comment>
<evidence type="ECO:0000255" key="1">
    <source>
        <dbReference type="HAMAP-Rule" id="MF_01522"/>
    </source>
</evidence>
<sequence>MTSTHADKTGDVASRTGFVGLVVGAIGVVYGDIGTSPLYAFREALRPFTADGVHEFEVIGLISLMIWTLTIIVTFKYVLFLLRADNDGEGGTLSLLALLMKKMGRNVPVLFFAGLIGSALFIGDAMITPALSVMSALEGLKLITPAFAEYVPPLSAAIMIVLFAAQSRGTAAVSMFFGPITVLWFFAMAAGGVIHIGDDWRILAAINPINALSFLAHAGTVGLIVLGAVFLTVTGAEALYADLGHFGRRPIQMAWFVLVFPALLLNYLGQGALVLSQPAASADPFFLMYPDWALLPVVLLATLATIIASQAVITGAFSLARQAVHLGFLPRLRIKFTSETNTGQIYVPSVNLLLLTGVLMLIFSFGDSESLATAYGISVTGAMVITTMLAFQFLRAVWGYSFMLASAALLPLFVIEVVFLAANLLKIQDGGWVPVALALAIMTLMWTWTRGQTYLKKLRANNEIPLDSFIRSIERKSDHSPVTVPGTAVFLTSVPDRTPNVLLHNLKHNHVLHEQNVILTVWTEDEPYVPDNRRIKISQLSPRFVRLDINFGFMDDPDVTRALALCREGGFKFEIMKTSFYLGRRNLVRTPNTGLPGWQERIFMALEGFAIDPSDYFNLPSNRVVELGEQVAI</sequence>
<organism>
    <name type="scientific">Rhizobium etli (strain ATCC 51251 / DSM 11541 / JCM 21823 / NBRC 15573 / CFN 42)</name>
    <dbReference type="NCBI Taxonomy" id="347834"/>
    <lineage>
        <taxon>Bacteria</taxon>
        <taxon>Pseudomonadati</taxon>
        <taxon>Pseudomonadota</taxon>
        <taxon>Alphaproteobacteria</taxon>
        <taxon>Hyphomicrobiales</taxon>
        <taxon>Rhizobiaceae</taxon>
        <taxon>Rhizobium/Agrobacterium group</taxon>
        <taxon>Rhizobium</taxon>
    </lineage>
</organism>
<name>KUP2_RHIEC</name>
<feature type="chain" id="PRO_0000279819" description="Probable potassium transport system protein Kup 2">
    <location>
        <begin position="1"/>
        <end position="633"/>
    </location>
</feature>
<feature type="transmembrane region" description="Helical" evidence="1">
    <location>
        <begin position="18"/>
        <end position="38"/>
    </location>
</feature>
<feature type="transmembrane region" description="Helical" evidence="1">
    <location>
        <begin position="61"/>
        <end position="81"/>
    </location>
</feature>
<feature type="transmembrane region" description="Helical" evidence="1">
    <location>
        <begin position="107"/>
        <end position="127"/>
    </location>
</feature>
<feature type="transmembrane region" description="Helical" evidence="1">
    <location>
        <begin position="143"/>
        <end position="163"/>
    </location>
</feature>
<feature type="transmembrane region" description="Helical" evidence="1">
    <location>
        <begin position="176"/>
        <end position="196"/>
    </location>
</feature>
<feature type="transmembrane region" description="Helical" evidence="1">
    <location>
        <begin position="211"/>
        <end position="231"/>
    </location>
</feature>
<feature type="transmembrane region" description="Helical" evidence="1">
    <location>
        <begin position="255"/>
        <end position="275"/>
    </location>
</feature>
<feature type="transmembrane region" description="Helical" evidence="1">
    <location>
        <begin position="293"/>
        <end position="313"/>
    </location>
</feature>
<feature type="transmembrane region" description="Helical" evidence="1">
    <location>
        <begin position="345"/>
        <end position="365"/>
    </location>
</feature>
<feature type="transmembrane region" description="Helical" evidence="1">
    <location>
        <begin position="371"/>
        <end position="391"/>
    </location>
</feature>
<feature type="transmembrane region" description="Helical" evidence="1">
    <location>
        <begin position="402"/>
        <end position="422"/>
    </location>
</feature>
<feature type="transmembrane region" description="Helical" evidence="1">
    <location>
        <begin position="429"/>
        <end position="449"/>
    </location>
</feature>
<keyword id="KW-0997">Cell inner membrane</keyword>
<keyword id="KW-1003">Cell membrane</keyword>
<keyword id="KW-0406">Ion transport</keyword>
<keyword id="KW-0472">Membrane</keyword>
<keyword id="KW-0630">Potassium</keyword>
<keyword id="KW-0633">Potassium transport</keyword>
<keyword id="KW-1185">Reference proteome</keyword>
<keyword id="KW-0769">Symport</keyword>
<keyword id="KW-0812">Transmembrane</keyword>
<keyword id="KW-1133">Transmembrane helix</keyword>
<keyword id="KW-0813">Transport</keyword>
<accession>Q2K711</accession>
<reference key="1">
    <citation type="journal article" date="2006" name="Proc. Natl. Acad. Sci. U.S.A.">
        <title>The partitioned Rhizobium etli genome: genetic and metabolic redundancy in seven interacting replicons.</title>
        <authorList>
            <person name="Gonzalez V."/>
            <person name="Santamaria R.I."/>
            <person name="Bustos P."/>
            <person name="Hernandez-Gonzalez I."/>
            <person name="Medrano-Soto A."/>
            <person name="Moreno-Hagelsieb G."/>
            <person name="Janga S.C."/>
            <person name="Ramirez M.A."/>
            <person name="Jimenez-Jacinto V."/>
            <person name="Collado-Vides J."/>
            <person name="Davila G."/>
        </authorList>
    </citation>
    <scope>NUCLEOTIDE SEQUENCE [LARGE SCALE GENOMIC DNA]</scope>
    <source>
        <strain>ATCC 51251 / DSM 11541 / JCM 21823 / NBRC 15573 / CFN 42</strain>
    </source>
</reference>
<proteinExistence type="inferred from homology"/>
<dbReference type="EMBL" id="CP000133">
    <property type="protein sequence ID" value="ABC91375.1"/>
    <property type="molecule type" value="Genomic_DNA"/>
</dbReference>
<dbReference type="RefSeq" id="WP_011425853.1">
    <property type="nucleotide sequence ID" value="NC_007761.1"/>
</dbReference>
<dbReference type="KEGG" id="ret:RHE_CH02603"/>
<dbReference type="eggNOG" id="COG3158">
    <property type="taxonomic scope" value="Bacteria"/>
</dbReference>
<dbReference type="HOGENOM" id="CLU_008142_4_2_5"/>
<dbReference type="OrthoDB" id="9805577at2"/>
<dbReference type="Proteomes" id="UP000001936">
    <property type="component" value="Chromosome"/>
</dbReference>
<dbReference type="GO" id="GO:0005886">
    <property type="term" value="C:plasma membrane"/>
    <property type="evidence" value="ECO:0007669"/>
    <property type="project" value="UniProtKB-SubCell"/>
</dbReference>
<dbReference type="GO" id="GO:0015079">
    <property type="term" value="F:potassium ion transmembrane transporter activity"/>
    <property type="evidence" value="ECO:0007669"/>
    <property type="project" value="UniProtKB-UniRule"/>
</dbReference>
<dbReference type="GO" id="GO:0015293">
    <property type="term" value="F:symporter activity"/>
    <property type="evidence" value="ECO:0007669"/>
    <property type="project" value="UniProtKB-UniRule"/>
</dbReference>
<dbReference type="HAMAP" id="MF_01522">
    <property type="entry name" value="Kup"/>
    <property type="match status" value="1"/>
</dbReference>
<dbReference type="InterPro" id="IPR003855">
    <property type="entry name" value="K+_transporter"/>
</dbReference>
<dbReference type="InterPro" id="IPR053952">
    <property type="entry name" value="K_trans_C"/>
</dbReference>
<dbReference type="InterPro" id="IPR053951">
    <property type="entry name" value="K_trans_N"/>
</dbReference>
<dbReference type="InterPro" id="IPR023051">
    <property type="entry name" value="Kup"/>
</dbReference>
<dbReference type="PANTHER" id="PTHR30540:SF79">
    <property type="entry name" value="LOW AFFINITY POTASSIUM TRANSPORT SYSTEM PROTEIN KUP"/>
    <property type="match status" value="1"/>
</dbReference>
<dbReference type="PANTHER" id="PTHR30540">
    <property type="entry name" value="OSMOTIC STRESS POTASSIUM TRANSPORTER"/>
    <property type="match status" value="1"/>
</dbReference>
<dbReference type="Pfam" id="PF02705">
    <property type="entry name" value="K_trans"/>
    <property type="match status" value="1"/>
</dbReference>
<dbReference type="Pfam" id="PF22776">
    <property type="entry name" value="K_trans_C"/>
    <property type="match status" value="1"/>
</dbReference>